<gene>
    <name evidence="1" type="primary">hutI</name>
    <name type="ordered locus">Sden_0081</name>
</gene>
<proteinExistence type="inferred from homology"/>
<accession>Q12T48</accession>
<organism>
    <name type="scientific">Shewanella denitrificans (strain OS217 / ATCC BAA-1090 / DSM 15013)</name>
    <dbReference type="NCBI Taxonomy" id="318161"/>
    <lineage>
        <taxon>Bacteria</taxon>
        <taxon>Pseudomonadati</taxon>
        <taxon>Pseudomonadota</taxon>
        <taxon>Gammaproteobacteria</taxon>
        <taxon>Alteromonadales</taxon>
        <taxon>Shewanellaceae</taxon>
        <taxon>Shewanella</taxon>
    </lineage>
</organism>
<keyword id="KW-0963">Cytoplasm</keyword>
<keyword id="KW-0369">Histidine metabolism</keyword>
<keyword id="KW-0378">Hydrolase</keyword>
<keyword id="KW-0408">Iron</keyword>
<keyword id="KW-0479">Metal-binding</keyword>
<keyword id="KW-1185">Reference proteome</keyword>
<keyword id="KW-0862">Zinc</keyword>
<reference key="1">
    <citation type="submission" date="2006-03" db="EMBL/GenBank/DDBJ databases">
        <title>Complete sequence of Shewanella denitrificans OS217.</title>
        <authorList>
            <consortium name="US DOE Joint Genome Institute"/>
            <person name="Copeland A."/>
            <person name="Lucas S."/>
            <person name="Lapidus A."/>
            <person name="Barry K."/>
            <person name="Detter J.C."/>
            <person name="Glavina del Rio T."/>
            <person name="Hammon N."/>
            <person name="Israni S."/>
            <person name="Dalin E."/>
            <person name="Tice H."/>
            <person name="Pitluck S."/>
            <person name="Brettin T."/>
            <person name="Bruce D."/>
            <person name="Han C."/>
            <person name="Tapia R."/>
            <person name="Gilna P."/>
            <person name="Kiss H."/>
            <person name="Schmutz J."/>
            <person name="Larimer F."/>
            <person name="Land M."/>
            <person name="Hauser L."/>
            <person name="Kyrpides N."/>
            <person name="Lykidis A."/>
            <person name="Richardson P."/>
        </authorList>
    </citation>
    <scope>NUCLEOTIDE SEQUENCE [LARGE SCALE GENOMIC DNA]</scope>
    <source>
        <strain>OS217 / ATCC BAA-1090 / DSM 15013</strain>
    </source>
</reference>
<evidence type="ECO:0000255" key="1">
    <source>
        <dbReference type="HAMAP-Rule" id="MF_00372"/>
    </source>
</evidence>
<name>HUTI_SHEDO</name>
<feature type="chain" id="PRO_0000306507" description="Imidazolonepropionase">
    <location>
        <begin position="1"/>
        <end position="414"/>
    </location>
</feature>
<feature type="binding site" evidence="1">
    <location>
        <position position="73"/>
    </location>
    <ligand>
        <name>Fe(3+)</name>
        <dbReference type="ChEBI" id="CHEBI:29034"/>
    </ligand>
</feature>
<feature type="binding site" evidence="1">
    <location>
        <position position="73"/>
    </location>
    <ligand>
        <name>Zn(2+)</name>
        <dbReference type="ChEBI" id="CHEBI:29105"/>
    </ligand>
</feature>
<feature type="binding site" evidence="1">
    <location>
        <position position="75"/>
    </location>
    <ligand>
        <name>Fe(3+)</name>
        <dbReference type="ChEBI" id="CHEBI:29034"/>
    </ligand>
</feature>
<feature type="binding site" evidence="1">
    <location>
        <position position="75"/>
    </location>
    <ligand>
        <name>Zn(2+)</name>
        <dbReference type="ChEBI" id="CHEBI:29105"/>
    </ligand>
</feature>
<feature type="binding site" evidence="1">
    <location>
        <position position="82"/>
    </location>
    <ligand>
        <name>4-imidazolone-5-propanoate</name>
        <dbReference type="ChEBI" id="CHEBI:77893"/>
    </ligand>
</feature>
<feature type="binding site" evidence="1">
    <location>
        <position position="145"/>
    </location>
    <ligand>
        <name>4-imidazolone-5-propanoate</name>
        <dbReference type="ChEBI" id="CHEBI:77893"/>
    </ligand>
</feature>
<feature type="binding site" evidence="1">
    <location>
        <position position="145"/>
    </location>
    <ligand>
        <name>N-formimidoyl-L-glutamate</name>
        <dbReference type="ChEBI" id="CHEBI:58928"/>
    </ligand>
</feature>
<feature type="binding site" evidence="1">
    <location>
        <position position="178"/>
    </location>
    <ligand>
        <name>4-imidazolone-5-propanoate</name>
        <dbReference type="ChEBI" id="CHEBI:77893"/>
    </ligand>
</feature>
<feature type="binding site" evidence="1">
    <location>
        <position position="249"/>
    </location>
    <ligand>
        <name>Fe(3+)</name>
        <dbReference type="ChEBI" id="CHEBI:29034"/>
    </ligand>
</feature>
<feature type="binding site" evidence="1">
    <location>
        <position position="249"/>
    </location>
    <ligand>
        <name>Zn(2+)</name>
        <dbReference type="ChEBI" id="CHEBI:29105"/>
    </ligand>
</feature>
<feature type="binding site" evidence="1">
    <location>
        <position position="252"/>
    </location>
    <ligand>
        <name>4-imidazolone-5-propanoate</name>
        <dbReference type="ChEBI" id="CHEBI:77893"/>
    </ligand>
</feature>
<feature type="binding site" evidence="1">
    <location>
        <position position="324"/>
    </location>
    <ligand>
        <name>Fe(3+)</name>
        <dbReference type="ChEBI" id="CHEBI:29034"/>
    </ligand>
</feature>
<feature type="binding site" evidence="1">
    <location>
        <position position="324"/>
    </location>
    <ligand>
        <name>Zn(2+)</name>
        <dbReference type="ChEBI" id="CHEBI:29105"/>
    </ligand>
</feature>
<feature type="binding site" evidence="1">
    <location>
        <position position="326"/>
    </location>
    <ligand>
        <name>N-formimidoyl-L-glutamate</name>
        <dbReference type="ChEBI" id="CHEBI:58928"/>
    </ligand>
</feature>
<feature type="binding site" evidence="1">
    <location>
        <position position="328"/>
    </location>
    <ligand>
        <name>N-formimidoyl-L-glutamate</name>
        <dbReference type="ChEBI" id="CHEBI:58928"/>
    </ligand>
</feature>
<feature type="binding site" evidence="1">
    <location>
        <position position="329"/>
    </location>
    <ligand>
        <name>4-imidazolone-5-propanoate</name>
        <dbReference type="ChEBI" id="CHEBI:77893"/>
    </ligand>
</feature>
<comment type="function">
    <text evidence="1">Catalyzes the hydrolytic cleavage of the carbon-nitrogen bond in imidazolone-5-propanoate to yield N-formimidoyl-L-glutamate. It is the third step in the universal histidine degradation pathway.</text>
</comment>
<comment type="catalytic activity">
    <reaction evidence="1">
        <text>4-imidazolone-5-propanoate + H2O = N-formimidoyl-L-glutamate</text>
        <dbReference type="Rhea" id="RHEA:23660"/>
        <dbReference type="ChEBI" id="CHEBI:15377"/>
        <dbReference type="ChEBI" id="CHEBI:58928"/>
        <dbReference type="ChEBI" id="CHEBI:77893"/>
        <dbReference type="EC" id="3.5.2.7"/>
    </reaction>
</comment>
<comment type="cofactor">
    <cofactor evidence="1">
        <name>Zn(2+)</name>
        <dbReference type="ChEBI" id="CHEBI:29105"/>
    </cofactor>
    <cofactor evidence="1">
        <name>Fe(3+)</name>
        <dbReference type="ChEBI" id="CHEBI:29034"/>
    </cofactor>
    <text evidence="1">Binds 1 zinc or iron ion per subunit.</text>
</comment>
<comment type="pathway">
    <text evidence="1">Amino-acid degradation; L-histidine degradation into L-glutamate; N-formimidoyl-L-glutamate from L-histidine: step 3/3.</text>
</comment>
<comment type="subcellular location">
    <subcellularLocation>
        <location evidence="1">Cytoplasm</location>
    </subcellularLocation>
</comment>
<comment type="similarity">
    <text evidence="1">Belongs to the metallo-dependent hydrolases superfamily. HutI family.</text>
</comment>
<dbReference type="EC" id="3.5.2.7" evidence="1"/>
<dbReference type="EMBL" id="CP000302">
    <property type="protein sequence ID" value="ABE53378.1"/>
    <property type="molecule type" value="Genomic_DNA"/>
</dbReference>
<dbReference type="RefSeq" id="WP_011494547.1">
    <property type="nucleotide sequence ID" value="NC_007954.1"/>
</dbReference>
<dbReference type="SMR" id="Q12T48"/>
<dbReference type="STRING" id="318161.Sden_0081"/>
<dbReference type="KEGG" id="sdn:Sden_0081"/>
<dbReference type="eggNOG" id="COG1228">
    <property type="taxonomic scope" value="Bacteria"/>
</dbReference>
<dbReference type="HOGENOM" id="CLU_041647_0_0_6"/>
<dbReference type="OrthoDB" id="9776455at2"/>
<dbReference type="UniPathway" id="UPA00379">
    <property type="reaction ID" value="UER00551"/>
</dbReference>
<dbReference type="Proteomes" id="UP000001982">
    <property type="component" value="Chromosome"/>
</dbReference>
<dbReference type="GO" id="GO:0005737">
    <property type="term" value="C:cytoplasm"/>
    <property type="evidence" value="ECO:0007669"/>
    <property type="project" value="UniProtKB-SubCell"/>
</dbReference>
<dbReference type="GO" id="GO:0050480">
    <property type="term" value="F:imidazolonepropionase activity"/>
    <property type="evidence" value="ECO:0007669"/>
    <property type="project" value="UniProtKB-UniRule"/>
</dbReference>
<dbReference type="GO" id="GO:0005506">
    <property type="term" value="F:iron ion binding"/>
    <property type="evidence" value="ECO:0007669"/>
    <property type="project" value="UniProtKB-UniRule"/>
</dbReference>
<dbReference type="GO" id="GO:0008270">
    <property type="term" value="F:zinc ion binding"/>
    <property type="evidence" value="ECO:0007669"/>
    <property type="project" value="UniProtKB-UniRule"/>
</dbReference>
<dbReference type="GO" id="GO:0019556">
    <property type="term" value="P:L-histidine catabolic process to glutamate and formamide"/>
    <property type="evidence" value="ECO:0007669"/>
    <property type="project" value="UniProtKB-UniPathway"/>
</dbReference>
<dbReference type="GO" id="GO:0019557">
    <property type="term" value="P:L-histidine catabolic process to glutamate and formate"/>
    <property type="evidence" value="ECO:0007669"/>
    <property type="project" value="UniProtKB-UniPathway"/>
</dbReference>
<dbReference type="CDD" id="cd01296">
    <property type="entry name" value="Imidazolone-5PH"/>
    <property type="match status" value="1"/>
</dbReference>
<dbReference type="FunFam" id="3.20.20.140:FF:000007">
    <property type="entry name" value="Imidazolonepropionase"/>
    <property type="match status" value="1"/>
</dbReference>
<dbReference type="Gene3D" id="3.20.20.140">
    <property type="entry name" value="Metal-dependent hydrolases"/>
    <property type="match status" value="1"/>
</dbReference>
<dbReference type="Gene3D" id="2.30.40.10">
    <property type="entry name" value="Urease, subunit C, domain 1"/>
    <property type="match status" value="1"/>
</dbReference>
<dbReference type="HAMAP" id="MF_00372">
    <property type="entry name" value="HutI"/>
    <property type="match status" value="1"/>
</dbReference>
<dbReference type="InterPro" id="IPR006680">
    <property type="entry name" value="Amidohydro-rel"/>
</dbReference>
<dbReference type="InterPro" id="IPR005920">
    <property type="entry name" value="HutI"/>
</dbReference>
<dbReference type="InterPro" id="IPR011059">
    <property type="entry name" value="Metal-dep_hydrolase_composite"/>
</dbReference>
<dbReference type="InterPro" id="IPR032466">
    <property type="entry name" value="Metal_Hydrolase"/>
</dbReference>
<dbReference type="NCBIfam" id="TIGR01224">
    <property type="entry name" value="hutI"/>
    <property type="match status" value="1"/>
</dbReference>
<dbReference type="PANTHER" id="PTHR42752">
    <property type="entry name" value="IMIDAZOLONEPROPIONASE"/>
    <property type="match status" value="1"/>
</dbReference>
<dbReference type="PANTHER" id="PTHR42752:SF1">
    <property type="entry name" value="IMIDAZOLONEPROPIONASE-RELATED"/>
    <property type="match status" value="1"/>
</dbReference>
<dbReference type="Pfam" id="PF01979">
    <property type="entry name" value="Amidohydro_1"/>
    <property type="match status" value="1"/>
</dbReference>
<dbReference type="SUPFAM" id="SSF51338">
    <property type="entry name" value="Composite domain of metallo-dependent hydrolases"/>
    <property type="match status" value="1"/>
</dbReference>
<dbReference type="SUPFAM" id="SSF51556">
    <property type="entry name" value="Metallo-dependent hydrolases"/>
    <property type="match status" value="1"/>
</dbReference>
<protein>
    <recommendedName>
        <fullName evidence="1">Imidazolonepropionase</fullName>
        <ecNumber evidence="1">3.5.2.7</ecNumber>
    </recommendedName>
    <alternativeName>
        <fullName evidence="1">Imidazolone-5-propionate hydrolase</fullName>
    </alternativeName>
</protein>
<sequence>MSWDQVWIDINIATMDANIGEPYGAITQAAMAVKDGKIAWLGPRSELPEFDVLATPVYRGKGNWVTPGLIDAHTHLVFAGSRANEFELRLKGASYEEIARAGGGIISTVKACREADEAELFELGRQRLNALAKEGVTTVEIKSGYGLDIETELKLLRVARELGKHHHVDIKTTFLGAHAIPSEYKDAANSTERSDAYVDLVVNEMLPAVMAENLADAVDVFCEGIAFNLAQTKRVFTAAKQAGLDIKLHAEQLSNIGGSQLAAQMGALSVDHIEYLDEAGVKALSESGTCAVLLPGAFYFLRETKLPPIDLLRQYKVPMVVASDYNPGSSPICSSLLMLNMACTLFRLTPEEALAGMTVNAAKALGIGDNVGHLAVGMQADFCLWNISSAAELAYSYGVDRLIDVVKTGKLVHQ</sequence>